<protein>
    <recommendedName>
        <fullName evidence="1">Malate dehydrogenase</fullName>
        <ecNumber evidence="1">1.1.1.37</ecNumber>
    </recommendedName>
</protein>
<comment type="function">
    <text evidence="1">Catalyzes the reversible oxidation of malate to oxaloacetate.</text>
</comment>
<comment type="catalytic activity">
    <reaction evidence="1">
        <text>(S)-malate + NAD(+) = oxaloacetate + NADH + H(+)</text>
        <dbReference type="Rhea" id="RHEA:21432"/>
        <dbReference type="ChEBI" id="CHEBI:15378"/>
        <dbReference type="ChEBI" id="CHEBI:15589"/>
        <dbReference type="ChEBI" id="CHEBI:16452"/>
        <dbReference type="ChEBI" id="CHEBI:57540"/>
        <dbReference type="ChEBI" id="CHEBI:57945"/>
        <dbReference type="EC" id="1.1.1.37"/>
    </reaction>
</comment>
<comment type="subunit">
    <text evidence="1">Homodimer.</text>
</comment>
<comment type="similarity">
    <text evidence="1">Belongs to the LDH/MDH superfamily. MDH type 1 family.</text>
</comment>
<evidence type="ECO:0000255" key="1">
    <source>
        <dbReference type="HAMAP-Rule" id="MF_01516"/>
    </source>
</evidence>
<sequence length="312" mass="32337">MKVAVLGAAGGIGQALALLLKTQLPSGSELSLYDIAPVTPGVAVDLSHIPTAVKIKGFSGEDATPALEGADVVLISAGVARKPGMDRSDLFNVNAGIVKNLVQQVAKTCPKACIGIITNPVNTTVAIAAEVLKKAGVYDKNKLFGVTTLDIIRSNTFVAELKGKQPGEVEVPVIGGHSGVTILPLLSQVPGVSFTEQEVADLTKRIQNAGTEVVEAKAGGGSATLSMGQAAARFGLSLVRALQGEQGVVECAYVEGDGQYARFFSQPLLLGKNGVEERKSIGTLSAFEQNALEGMLDTLKKDIALGEEFVNK</sequence>
<accession>B7MBZ7</accession>
<proteinExistence type="inferred from homology"/>
<reference key="1">
    <citation type="journal article" date="2009" name="PLoS Genet.">
        <title>Organised genome dynamics in the Escherichia coli species results in highly diverse adaptive paths.</title>
        <authorList>
            <person name="Touchon M."/>
            <person name="Hoede C."/>
            <person name="Tenaillon O."/>
            <person name="Barbe V."/>
            <person name="Baeriswyl S."/>
            <person name="Bidet P."/>
            <person name="Bingen E."/>
            <person name="Bonacorsi S."/>
            <person name="Bouchier C."/>
            <person name="Bouvet O."/>
            <person name="Calteau A."/>
            <person name="Chiapello H."/>
            <person name="Clermont O."/>
            <person name="Cruveiller S."/>
            <person name="Danchin A."/>
            <person name="Diard M."/>
            <person name="Dossat C."/>
            <person name="Karoui M.E."/>
            <person name="Frapy E."/>
            <person name="Garry L."/>
            <person name="Ghigo J.M."/>
            <person name="Gilles A.M."/>
            <person name="Johnson J."/>
            <person name="Le Bouguenec C."/>
            <person name="Lescat M."/>
            <person name="Mangenot S."/>
            <person name="Martinez-Jehanne V."/>
            <person name="Matic I."/>
            <person name="Nassif X."/>
            <person name="Oztas S."/>
            <person name="Petit M.A."/>
            <person name="Pichon C."/>
            <person name="Rouy Z."/>
            <person name="Ruf C.S."/>
            <person name="Schneider D."/>
            <person name="Tourret J."/>
            <person name="Vacherie B."/>
            <person name="Vallenet D."/>
            <person name="Medigue C."/>
            <person name="Rocha E.P.C."/>
            <person name="Denamur E."/>
        </authorList>
    </citation>
    <scope>NUCLEOTIDE SEQUENCE [LARGE SCALE GENOMIC DNA]</scope>
    <source>
        <strain>S88 / ExPEC</strain>
    </source>
</reference>
<feature type="chain" id="PRO_1000146169" description="Malate dehydrogenase">
    <location>
        <begin position="1"/>
        <end position="312"/>
    </location>
</feature>
<feature type="active site" description="Proton acceptor" evidence="1">
    <location>
        <position position="177"/>
    </location>
</feature>
<feature type="binding site" evidence="1">
    <location>
        <begin position="7"/>
        <end position="13"/>
    </location>
    <ligand>
        <name>NAD(+)</name>
        <dbReference type="ChEBI" id="CHEBI:57540"/>
    </ligand>
</feature>
<feature type="binding site" evidence="1">
    <location>
        <position position="34"/>
    </location>
    <ligand>
        <name>NAD(+)</name>
        <dbReference type="ChEBI" id="CHEBI:57540"/>
    </ligand>
</feature>
<feature type="binding site" evidence="1">
    <location>
        <position position="81"/>
    </location>
    <ligand>
        <name>substrate</name>
    </ligand>
</feature>
<feature type="binding site" evidence="1">
    <location>
        <position position="87"/>
    </location>
    <ligand>
        <name>substrate</name>
    </ligand>
</feature>
<feature type="binding site" evidence="1">
    <location>
        <position position="94"/>
    </location>
    <ligand>
        <name>NAD(+)</name>
        <dbReference type="ChEBI" id="CHEBI:57540"/>
    </ligand>
</feature>
<feature type="binding site" evidence="1">
    <location>
        <begin position="117"/>
        <end position="119"/>
    </location>
    <ligand>
        <name>NAD(+)</name>
        <dbReference type="ChEBI" id="CHEBI:57540"/>
    </ligand>
</feature>
<feature type="binding site" evidence="1">
    <location>
        <position position="119"/>
    </location>
    <ligand>
        <name>substrate</name>
    </ligand>
</feature>
<feature type="binding site" evidence="1">
    <location>
        <position position="153"/>
    </location>
    <ligand>
        <name>substrate</name>
    </ligand>
</feature>
<feature type="binding site" evidence="1">
    <location>
        <position position="227"/>
    </location>
    <ligand>
        <name>NAD(+)</name>
        <dbReference type="ChEBI" id="CHEBI:57540"/>
    </ligand>
</feature>
<gene>
    <name evidence="1" type="primary">mdh</name>
    <name type="ordered locus">ECS88_3612</name>
</gene>
<name>MDH_ECO45</name>
<keyword id="KW-0520">NAD</keyword>
<keyword id="KW-0560">Oxidoreductase</keyword>
<keyword id="KW-1185">Reference proteome</keyword>
<keyword id="KW-0816">Tricarboxylic acid cycle</keyword>
<organism>
    <name type="scientific">Escherichia coli O45:K1 (strain S88 / ExPEC)</name>
    <dbReference type="NCBI Taxonomy" id="585035"/>
    <lineage>
        <taxon>Bacteria</taxon>
        <taxon>Pseudomonadati</taxon>
        <taxon>Pseudomonadota</taxon>
        <taxon>Gammaproteobacteria</taxon>
        <taxon>Enterobacterales</taxon>
        <taxon>Enterobacteriaceae</taxon>
        <taxon>Escherichia</taxon>
    </lineage>
</organism>
<dbReference type="EC" id="1.1.1.37" evidence="1"/>
<dbReference type="EMBL" id="CU928161">
    <property type="protein sequence ID" value="CAR04838.1"/>
    <property type="molecule type" value="Genomic_DNA"/>
</dbReference>
<dbReference type="RefSeq" id="WP_001295272.1">
    <property type="nucleotide sequence ID" value="NC_011742.1"/>
</dbReference>
<dbReference type="SMR" id="B7MBZ7"/>
<dbReference type="GeneID" id="93778749"/>
<dbReference type="KEGG" id="ecz:ECS88_3612"/>
<dbReference type="HOGENOM" id="CLU_047181_0_1_6"/>
<dbReference type="Proteomes" id="UP000000747">
    <property type="component" value="Chromosome"/>
</dbReference>
<dbReference type="GO" id="GO:0005737">
    <property type="term" value="C:cytoplasm"/>
    <property type="evidence" value="ECO:0007669"/>
    <property type="project" value="TreeGrafter"/>
</dbReference>
<dbReference type="GO" id="GO:0030060">
    <property type="term" value="F:L-malate dehydrogenase (NAD+) activity"/>
    <property type="evidence" value="ECO:0007669"/>
    <property type="project" value="UniProtKB-UniRule"/>
</dbReference>
<dbReference type="GO" id="GO:0006108">
    <property type="term" value="P:malate metabolic process"/>
    <property type="evidence" value="ECO:0007669"/>
    <property type="project" value="InterPro"/>
</dbReference>
<dbReference type="GO" id="GO:0006099">
    <property type="term" value="P:tricarboxylic acid cycle"/>
    <property type="evidence" value="ECO:0007669"/>
    <property type="project" value="UniProtKB-UniRule"/>
</dbReference>
<dbReference type="CDD" id="cd01337">
    <property type="entry name" value="MDH_glyoxysomal_mitochondrial"/>
    <property type="match status" value="1"/>
</dbReference>
<dbReference type="FunFam" id="3.40.50.720:FF:000017">
    <property type="entry name" value="Malate dehydrogenase"/>
    <property type="match status" value="1"/>
</dbReference>
<dbReference type="FunFam" id="3.90.110.10:FF:000001">
    <property type="entry name" value="Malate dehydrogenase"/>
    <property type="match status" value="1"/>
</dbReference>
<dbReference type="Gene3D" id="3.90.110.10">
    <property type="entry name" value="Lactate dehydrogenase/glycoside hydrolase, family 4, C-terminal"/>
    <property type="match status" value="1"/>
</dbReference>
<dbReference type="Gene3D" id="3.40.50.720">
    <property type="entry name" value="NAD(P)-binding Rossmann-like Domain"/>
    <property type="match status" value="1"/>
</dbReference>
<dbReference type="HAMAP" id="MF_01516">
    <property type="entry name" value="Malate_dehydrog_1"/>
    <property type="match status" value="1"/>
</dbReference>
<dbReference type="InterPro" id="IPR001557">
    <property type="entry name" value="L-lactate/malate_DH"/>
</dbReference>
<dbReference type="InterPro" id="IPR022383">
    <property type="entry name" value="Lactate/malate_DH_C"/>
</dbReference>
<dbReference type="InterPro" id="IPR001236">
    <property type="entry name" value="Lactate/malate_DH_N"/>
</dbReference>
<dbReference type="InterPro" id="IPR015955">
    <property type="entry name" value="Lactate_DH/Glyco_Ohase_4_C"/>
</dbReference>
<dbReference type="InterPro" id="IPR001252">
    <property type="entry name" value="Malate_DH_AS"/>
</dbReference>
<dbReference type="InterPro" id="IPR010097">
    <property type="entry name" value="Malate_DH_type1"/>
</dbReference>
<dbReference type="InterPro" id="IPR023958">
    <property type="entry name" value="Malate_DH_type1_bac"/>
</dbReference>
<dbReference type="InterPro" id="IPR036291">
    <property type="entry name" value="NAD(P)-bd_dom_sf"/>
</dbReference>
<dbReference type="NCBIfam" id="TIGR01772">
    <property type="entry name" value="MDH_euk_gproteo"/>
    <property type="match status" value="1"/>
</dbReference>
<dbReference type="PANTHER" id="PTHR11540">
    <property type="entry name" value="MALATE AND LACTATE DEHYDROGENASE"/>
    <property type="match status" value="1"/>
</dbReference>
<dbReference type="PANTHER" id="PTHR11540:SF16">
    <property type="entry name" value="MALATE DEHYDROGENASE, MITOCHONDRIAL"/>
    <property type="match status" value="1"/>
</dbReference>
<dbReference type="Pfam" id="PF02866">
    <property type="entry name" value="Ldh_1_C"/>
    <property type="match status" value="1"/>
</dbReference>
<dbReference type="Pfam" id="PF00056">
    <property type="entry name" value="Ldh_1_N"/>
    <property type="match status" value="1"/>
</dbReference>
<dbReference type="PIRSF" id="PIRSF000102">
    <property type="entry name" value="Lac_mal_DH"/>
    <property type="match status" value="1"/>
</dbReference>
<dbReference type="SUPFAM" id="SSF56327">
    <property type="entry name" value="LDH C-terminal domain-like"/>
    <property type="match status" value="1"/>
</dbReference>
<dbReference type="SUPFAM" id="SSF51735">
    <property type="entry name" value="NAD(P)-binding Rossmann-fold domains"/>
    <property type="match status" value="1"/>
</dbReference>
<dbReference type="PROSITE" id="PS00068">
    <property type="entry name" value="MDH"/>
    <property type="match status" value="1"/>
</dbReference>